<organism>
    <name type="scientific">Clostridium botulinum (strain Langeland / NCTC 10281 / Type F)</name>
    <dbReference type="NCBI Taxonomy" id="441772"/>
    <lineage>
        <taxon>Bacteria</taxon>
        <taxon>Bacillati</taxon>
        <taxon>Bacillota</taxon>
        <taxon>Clostridia</taxon>
        <taxon>Eubacteriales</taxon>
        <taxon>Clostridiaceae</taxon>
        <taxon>Clostridium</taxon>
    </lineage>
</organism>
<dbReference type="EC" id="3.5.1.44" evidence="1"/>
<dbReference type="EMBL" id="CP000728">
    <property type="protein sequence ID" value="ABS39635.1"/>
    <property type="molecule type" value="Genomic_DNA"/>
</dbReference>
<dbReference type="RefSeq" id="WP_003359122.1">
    <property type="nucleotide sequence ID" value="NC_009699.1"/>
</dbReference>
<dbReference type="SMR" id="A7GGW9"/>
<dbReference type="KEGG" id="cbf:CLI_2801"/>
<dbReference type="HOGENOM" id="CLU_087854_2_0_9"/>
<dbReference type="Proteomes" id="UP000002410">
    <property type="component" value="Chromosome"/>
</dbReference>
<dbReference type="GO" id="GO:0050568">
    <property type="term" value="F:protein-glutamine glutaminase activity"/>
    <property type="evidence" value="ECO:0007669"/>
    <property type="project" value="UniProtKB-UniRule"/>
</dbReference>
<dbReference type="GO" id="GO:0006935">
    <property type="term" value="P:chemotaxis"/>
    <property type="evidence" value="ECO:0007669"/>
    <property type="project" value="UniProtKB-UniRule"/>
</dbReference>
<dbReference type="CDD" id="cd16352">
    <property type="entry name" value="CheD"/>
    <property type="match status" value="1"/>
</dbReference>
<dbReference type="Gene3D" id="3.30.1330.200">
    <property type="match status" value="1"/>
</dbReference>
<dbReference type="HAMAP" id="MF_01440">
    <property type="entry name" value="CheD"/>
    <property type="match status" value="1"/>
</dbReference>
<dbReference type="InterPro" id="IPR038592">
    <property type="entry name" value="CheD-like_sf"/>
</dbReference>
<dbReference type="InterPro" id="IPR005659">
    <property type="entry name" value="Chemorcpt_Glu_NH3ase_CheD"/>
</dbReference>
<dbReference type="InterPro" id="IPR011324">
    <property type="entry name" value="Cytotoxic_necrot_fac-like_cat"/>
</dbReference>
<dbReference type="NCBIfam" id="NF010015">
    <property type="entry name" value="PRK13490.1"/>
    <property type="match status" value="1"/>
</dbReference>
<dbReference type="PANTHER" id="PTHR35147">
    <property type="entry name" value="CHEMORECEPTOR GLUTAMINE DEAMIDASE CHED-RELATED"/>
    <property type="match status" value="1"/>
</dbReference>
<dbReference type="PANTHER" id="PTHR35147:SF1">
    <property type="entry name" value="CHEMORECEPTOR GLUTAMINE DEAMIDASE CHED-RELATED"/>
    <property type="match status" value="1"/>
</dbReference>
<dbReference type="Pfam" id="PF03975">
    <property type="entry name" value="CheD"/>
    <property type="match status" value="1"/>
</dbReference>
<dbReference type="SUPFAM" id="SSF64438">
    <property type="entry name" value="CNF1/YfiH-like putative cysteine hydrolases"/>
    <property type="match status" value="1"/>
</dbReference>
<keyword id="KW-0145">Chemotaxis</keyword>
<keyword id="KW-0378">Hydrolase</keyword>
<gene>
    <name evidence="1" type="primary">cheD</name>
    <name type="ordered locus">CLI_2801</name>
</gene>
<reference key="1">
    <citation type="submission" date="2007-06" db="EMBL/GenBank/DDBJ databases">
        <authorList>
            <person name="Brinkac L.M."/>
            <person name="Daugherty S."/>
            <person name="Dodson R.J."/>
            <person name="Madupu R."/>
            <person name="Brown J.L."/>
            <person name="Bruce D."/>
            <person name="Detter C."/>
            <person name="Munk C."/>
            <person name="Smith L.A."/>
            <person name="Smith T.J."/>
            <person name="White O."/>
            <person name="Brettin T.S."/>
        </authorList>
    </citation>
    <scope>NUCLEOTIDE SEQUENCE [LARGE SCALE GENOMIC DNA]</scope>
    <source>
        <strain>Langeland / NCTC 10281 / Type F</strain>
    </source>
</reference>
<evidence type="ECO:0000255" key="1">
    <source>
        <dbReference type="HAMAP-Rule" id="MF_01440"/>
    </source>
</evidence>
<name>CHED_CLOBL</name>
<sequence length="162" mass="17318">MDIKEIKVGIADLNVGKNPDKIITVGLGSCIGIALYDGIKCIGGLSHIMLPDSTQFSKVTNPMKFADLAIPILVEKMEKLGARKNGLKAKICGGASMFNFSDKSMVMDIGNRNGKAVKEKLKELSIPLLAEDIGGNKGRTMIFDTSTGKVYIKTVGLGTKEI</sequence>
<comment type="function">
    <text evidence="1">Probably deamidates glutamine residues to glutamate on methyl-accepting chemotaxis receptors (MCPs), playing an important role in chemotaxis.</text>
</comment>
<comment type="catalytic activity">
    <reaction evidence="1">
        <text>L-glutaminyl-[protein] + H2O = L-glutamyl-[protein] + NH4(+)</text>
        <dbReference type="Rhea" id="RHEA:16441"/>
        <dbReference type="Rhea" id="RHEA-COMP:10207"/>
        <dbReference type="Rhea" id="RHEA-COMP:10208"/>
        <dbReference type="ChEBI" id="CHEBI:15377"/>
        <dbReference type="ChEBI" id="CHEBI:28938"/>
        <dbReference type="ChEBI" id="CHEBI:29973"/>
        <dbReference type="ChEBI" id="CHEBI:30011"/>
        <dbReference type="EC" id="3.5.1.44"/>
    </reaction>
</comment>
<comment type="similarity">
    <text evidence="1">Belongs to the CheD family.</text>
</comment>
<feature type="chain" id="PRO_1000073515" description="Probable chemoreceptor glutamine deamidase CheD">
    <location>
        <begin position="1"/>
        <end position="162"/>
    </location>
</feature>
<proteinExistence type="inferred from homology"/>
<accession>A7GGW9</accession>
<protein>
    <recommendedName>
        <fullName evidence="1">Probable chemoreceptor glutamine deamidase CheD</fullName>
        <ecNumber evidence="1">3.5.1.44</ecNumber>
    </recommendedName>
</protein>